<organism>
    <name type="scientific">Cupriavidus pinatubonensis (strain JMP 134 / LMG 1197)</name>
    <name type="common">Cupriavidus necator (strain JMP 134)</name>
    <dbReference type="NCBI Taxonomy" id="264198"/>
    <lineage>
        <taxon>Bacteria</taxon>
        <taxon>Pseudomonadati</taxon>
        <taxon>Pseudomonadota</taxon>
        <taxon>Betaproteobacteria</taxon>
        <taxon>Burkholderiales</taxon>
        <taxon>Burkholderiaceae</taxon>
        <taxon>Cupriavidus</taxon>
    </lineage>
</organism>
<evidence type="ECO:0000255" key="1">
    <source>
        <dbReference type="HAMAP-Rule" id="MF_01527"/>
    </source>
</evidence>
<sequence length="270" mass="30293">MNDINPAFVMPDVQSSRDTRQIPIQRVGVKGVRYPVSLKTPAGVVPSVGTFNLDVHLPAEVKGTHMSRFVALLEEERAPLELASFRVLLDKMLEKLEAEAGRIEVTFPYFISKIAPVSGVESLMDYEVTLTGEIRNGVTRVFLKALVPVTSLCPCSKKISQYGAHNQRSHITMNVELAGELPVEALVRMAEEEASCELWGLLKRPDEKFVTERAYENPKFVEDLVRDIAMRLNADERIVAYVLEAENFESIHNHSAYAVIERDKRLEPTA</sequence>
<keyword id="KW-0378">Hydrolase</keyword>
<accession>Q474C1</accession>
<reference key="1">
    <citation type="journal article" date="2010" name="PLoS ONE">
        <title>The complete multipartite genome sequence of Cupriavidus necator JMP134, a versatile pollutant degrader.</title>
        <authorList>
            <person name="Lykidis A."/>
            <person name="Perez-Pantoja D."/>
            <person name="Ledger T."/>
            <person name="Mavromatis K."/>
            <person name="Anderson I.J."/>
            <person name="Ivanova N.N."/>
            <person name="Hooper S.D."/>
            <person name="Lapidus A."/>
            <person name="Lucas S."/>
            <person name="Gonzalez B."/>
            <person name="Kyrpides N.C."/>
        </authorList>
    </citation>
    <scope>NUCLEOTIDE SEQUENCE [LARGE SCALE GENOMIC DNA]</scope>
    <source>
        <strain>JMP134 / LMG 1197</strain>
    </source>
</reference>
<comment type="function">
    <text evidence="1">Converts GTP to 7,8-dihydroneopterin triphosphate.</text>
</comment>
<comment type="catalytic activity">
    <reaction evidence="1">
        <text>GTP + H2O = 7,8-dihydroneopterin 3'-triphosphate + formate + H(+)</text>
        <dbReference type="Rhea" id="RHEA:17473"/>
        <dbReference type="ChEBI" id="CHEBI:15377"/>
        <dbReference type="ChEBI" id="CHEBI:15378"/>
        <dbReference type="ChEBI" id="CHEBI:15740"/>
        <dbReference type="ChEBI" id="CHEBI:37565"/>
        <dbReference type="ChEBI" id="CHEBI:58462"/>
        <dbReference type="EC" id="3.5.4.16"/>
    </reaction>
</comment>
<comment type="pathway">
    <text evidence="1">Cofactor biosynthesis; 7,8-dihydroneopterin triphosphate biosynthesis; 7,8-dihydroneopterin triphosphate from GTP: step 1/1.</text>
</comment>
<comment type="similarity">
    <text evidence="1">Belongs to the GTP cyclohydrolase IV family.</text>
</comment>
<name>GCH4_CUPPJ</name>
<dbReference type="EC" id="3.5.4.16" evidence="1"/>
<dbReference type="EMBL" id="CP000090">
    <property type="protein sequence ID" value="AAZ60262.1"/>
    <property type="molecule type" value="Genomic_DNA"/>
</dbReference>
<dbReference type="SMR" id="Q474C1"/>
<dbReference type="STRING" id="264198.Reut_A0883"/>
<dbReference type="KEGG" id="reu:Reut_A0883"/>
<dbReference type="eggNOG" id="COG1469">
    <property type="taxonomic scope" value="Bacteria"/>
</dbReference>
<dbReference type="HOGENOM" id="CLU_062816_1_1_4"/>
<dbReference type="OrthoDB" id="9774824at2"/>
<dbReference type="UniPathway" id="UPA00848">
    <property type="reaction ID" value="UER00151"/>
</dbReference>
<dbReference type="GO" id="GO:0003934">
    <property type="term" value="F:GTP cyclohydrolase I activity"/>
    <property type="evidence" value="ECO:0007669"/>
    <property type="project" value="UniProtKB-UniRule"/>
</dbReference>
<dbReference type="GO" id="GO:0046654">
    <property type="term" value="P:tetrahydrofolate biosynthetic process"/>
    <property type="evidence" value="ECO:0007669"/>
    <property type="project" value="UniProtKB-UniRule"/>
</dbReference>
<dbReference type="Gene3D" id="3.10.270.10">
    <property type="entry name" value="Urate Oxidase"/>
    <property type="match status" value="1"/>
</dbReference>
<dbReference type="HAMAP" id="MF_01527_B">
    <property type="entry name" value="GTP_cyclohydrol_B"/>
    <property type="match status" value="1"/>
</dbReference>
<dbReference type="InterPro" id="IPR022838">
    <property type="entry name" value="GTP_cyclohydrolase_FolE2"/>
</dbReference>
<dbReference type="InterPro" id="IPR003801">
    <property type="entry name" value="GTP_cyclohydrolase_FolE2/MptA"/>
</dbReference>
<dbReference type="NCBIfam" id="NF010200">
    <property type="entry name" value="PRK13674.1-1"/>
    <property type="match status" value="1"/>
</dbReference>
<dbReference type="PANTHER" id="PTHR36445">
    <property type="entry name" value="GTP CYCLOHYDROLASE MPTA"/>
    <property type="match status" value="1"/>
</dbReference>
<dbReference type="PANTHER" id="PTHR36445:SF1">
    <property type="entry name" value="GTP CYCLOHYDROLASE MPTA"/>
    <property type="match status" value="1"/>
</dbReference>
<dbReference type="Pfam" id="PF02649">
    <property type="entry name" value="GCHY-1"/>
    <property type="match status" value="1"/>
</dbReference>
<gene>
    <name evidence="1" type="primary">folE2</name>
    <name type="ordered locus">Reut_A0883</name>
</gene>
<protein>
    <recommendedName>
        <fullName evidence="1">GTP cyclohydrolase FolE2</fullName>
        <ecNumber evidence="1">3.5.4.16</ecNumber>
    </recommendedName>
</protein>
<proteinExistence type="inferred from homology"/>
<feature type="chain" id="PRO_0000289515" description="GTP cyclohydrolase FolE2">
    <location>
        <begin position="1"/>
        <end position="270"/>
    </location>
</feature>
<feature type="site" description="May be catalytically important" evidence="1">
    <location>
        <position position="153"/>
    </location>
</feature>